<keyword id="KW-0378">Hydrolase</keyword>
<keyword id="KW-1185">Reference proteome</keyword>
<name>GCH4_PSEAE</name>
<gene>
    <name evidence="1" type="primary">folE2</name>
    <name type="ordered locus">PA5539</name>
</gene>
<accession>Q9HT35</accession>
<sequence>MNALTLPDIARQTTTADLPLDWVGMQGIALPVQIGGQRVAAEADAGVSLDDPQARGIHMSRLYLALAELEQGELDLSCLRAVLQRFLDSHAGLSRRAYLRLRLAPLLRRPALVSPLSGWKRYPLVLDTRLEGDDFQAEVHLELTYSSTCPCSAALARQLIQERFDQDFAGQPLDHASVLAWLGSSAGIVATPHSQRSSAHLRIGLAEDCIGLPLEELADLGESALGTAVQTAVKRADEQAFALANGQNLMFCEDAVRRLHRALQGYPQASRFSIRVVHAESLHAHDAVAESHWQRGAA</sequence>
<comment type="function">
    <text evidence="1">Converts GTP to 7,8-dihydroneopterin triphosphate.</text>
</comment>
<comment type="catalytic activity">
    <reaction evidence="1">
        <text>GTP + H2O = 7,8-dihydroneopterin 3'-triphosphate + formate + H(+)</text>
        <dbReference type="Rhea" id="RHEA:17473"/>
        <dbReference type="ChEBI" id="CHEBI:15377"/>
        <dbReference type="ChEBI" id="CHEBI:15378"/>
        <dbReference type="ChEBI" id="CHEBI:15740"/>
        <dbReference type="ChEBI" id="CHEBI:37565"/>
        <dbReference type="ChEBI" id="CHEBI:58462"/>
        <dbReference type="EC" id="3.5.4.16"/>
    </reaction>
</comment>
<comment type="pathway">
    <text evidence="1">Cofactor biosynthesis; 7,8-dihydroneopterin triphosphate biosynthesis; 7,8-dihydroneopterin triphosphate from GTP: step 1/1.</text>
</comment>
<comment type="similarity">
    <text evidence="1">Belongs to the GTP cyclohydrolase IV family.</text>
</comment>
<proteinExistence type="inferred from homology"/>
<feature type="chain" id="PRO_0000147719" description="GTP cyclohydrolase FolE2">
    <location>
        <begin position="1"/>
        <end position="298"/>
    </location>
</feature>
<feature type="site" description="May be catalytically important" evidence="1">
    <location>
        <position position="149"/>
    </location>
</feature>
<reference key="1">
    <citation type="journal article" date="2000" name="Nature">
        <title>Complete genome sequence of Pseudomonas aeruginosa PAO1, an opportunistic pathogen.</title>
        <authorList>
            <person name="Stover C.K."/>
            <person name="Pham X.-Q.T."/>
            <person name="Erwin A.L."/>
            <person name="Mizoguchi S.D."/>
            <person name="Warrener P."/>
            <person name="Hickey M.J."/>
            <person name="Brinkman F.S.L."/>
            <person name="Hufnagle W.O."/>
            <person name="Kowalik D.J."/>
            <person name="Lagrou M."/>
            <person name="Garber R.L."/>
            <person name="Goltry L."/>
            <person name="Tolentino E."/>
            <person name="Westbrock-Wadman S."/>
            <person name="Yuan Y."/>
            <person name="Brody L.L."/>
            <person name="Coulter S.N."/>
            <person name="Folger K.R."/>
            <person name="Kas A."/>
            <person name="Larbig K."/>
            <person name="Lim R.M."/>
            <person name="Smith K.A."/>
            <person name="Spencer D.H."/>
            <person name="Wong G.K.-S."/>
            <person name="Wu Z."/>
            <person name="Paulsen I.T."/>
            <person name="Reizer J."/>
            <person name="Saier M.H. Jr."/>
            <person name="Hancock R.E.W."/>
            <person name="Lory S."/>
            <person name="Olson M.V."/>
        </authorList>
    </citation>
    <scope>NUCLEOTIDE SEQUENCE [LARGE SCALE GENOMIC DNA]</scope>
    <source>
        <strain>ATCC 15692 / DSM 22644 / CIP 104116 / JCM 14847 / LMG 12228 / 1C / PRS 101 / PAO1</strain>
    </source>
</reference>
<protein>
    <recommendedName>
        <fullName evidence="1">GTP cyclohydrolase FolE2</fullName>
        <ecNumber evidence="1">3.5.4.16</ecNumber>
    </recommendedName>
</protein>
<organism>
    <name type="scientific">Pseudomonas aeruginosa (strain ATCC 15692 / DSM 22644 / CIP 104116 / JCM 14847 / LMG 12228 / 1C / PRS 101 / PAO1)</name>
    <dbReference type="NCBI Taxonomy" id="208964"/>
    <lineage>
        <taxon>Bacteria</taxon>
        <taxon>Pseudomonadati</taxon>
        <taxon>Pseudomonadota</taxon>
        <taxon>Gammaproteobacteria</taxon>
        <taxon>Pseudomonadales</taxon>
        <taxon>Pseudomonadaceae</taxon>
        <taxon>Pseudomonas</taxon>
    </lineage>
</organism>
<dbReference type="EC" id="3.5.4.16" evidence="1"/>
<dbReference type="EMBL" id="AE004091">
    <property type="protein sequence ID" value="AAG08924.1"/>
    <property type="molecule type" value="Genomic_DNA"/>
</dbReference>
<dbReference type="PIR" id="H82953">
    <property type="entry name" value="H82953"/>
</dbReference>
<dbReference type="RefSeq" id="NP_254226.1">
    <property type="nucleotide sequence ID" value="NC_002516.2"/>
</dbReference>
<dbReference type="RefSeq" id="WP_003099665.1">
    <property type="nucleotide sequence ID" value="NZ_QZGE01000012.1"/>
</dbReference>
<dbReference type="SMR" id="Q9HT35"/>
<dbReference type="STRING" id="208964.PA5539"/>
<dbReference type="PaxDb" id="208964-PA5539"/>
<dbReference type="DNASU" id="877616"/>
<dbReference type="GeneID" id="877616"/>
<dbReference type="KEGG" id="pae:PA5539"/>
<dbReference type="PATRIC" id="fig|208964.12.peg.5805"/>
<dbReference type="PseudoCAP" id="PA5539"/>
<dbReference type="HOGENOM" id="CLU_062816_0_0_6"/>
<dbReference type="InParanoid" id="Q9HT35"/>
<dbReference type="OrthoDB" id="239637at2"/>
<dbReference type="PhylomeDB" id="Q9HT35"/>
<dbReference type="BioCyc" id="PAER208964:G1FZ6-5666-MONOMER"/>
<dbReference type="UniPathway" id="UPA00848">
    <property type="reaction ID" value="UER00151"/>
</dbReference>
<dbReference type="Proteomes" id="UP000002438">
    <property type="component" value="Chromosome"/>
</dbReference>
<dbReference type="GO" id="GO:0003933">
    <property type="term" value="F:GTP cyclohydrolase activity"/>
    <property type="evidence" value="ECO:0000318"/>
    <property type="project" value="GO_Central"/>
</dbReference>
<dbReference type="GO" id="GO:0003934">
    <property type="term" value="F:GTP cyclohydrolase I activity"/>
    <property type="evidence" value="ECO:0007669"/>
    <property type="project" value="UniProtKB-UniRule"/>
</dbReference>
<dbReference type="GO" id="GO:0046654">
    <property type="term" value="P:tetrahydrofolate biosynthetic process"/>
    <property type="evidence" value="ECO:0007669"/>
    <property type="project" value="UniProtKB-UniRule"/>
</dbReference>
<dbReference type="Gene3D" id="3.10.270.10">
    <property type="entry name" value="Urate Oxidase"/>
    <property type="match status" value="1"/>
</dbReference>
<dbReference type="HAMAP" id="MF_01527_B">
    <property type="entry name" value="GTP_cyclohydrol_B"/>
    <property type="match status" value="1"/>
</dbReference>
<dbReference type="InterPro" id="IPR022838">
    <property type="entry name" value="GTP_cyclohydrolase_FolE2"/>
</dbReference>
<dbReference type="InterPro" id="IPR003801">
    <property type="entry name" value="GTP_cyclohydrolase_FolE2/MptA"/>
</dbReference>
<dbReference type="NCBIfam" id="NF010200">
    <property type="entry name" value="PRK13674.1-1"/>
    <property type="match status" value="1"/>
</dbReference>
<dbReference type="PANTHER" id="PTHR36445">
    <property type="entry name" value="GTP CYCLOHYDROLASE MPTA"/>
    <property type="match status" value="1"/>
</dbReference>
<dbReference type="PANTHER" id="PTHR36445:SF1">
    <property type="entry name" value="GTP CYCLOHYDROLASE MPTA"/>
    <property type="match status" value="1"/>
</dbReference>
<dbReference type="Pfam" id="PF02649">
    <property type="entry name" value="GCHY-1"/>
    <property type="match status" value="1"/>
</dbReference>
<evidence type="ECO:0000255" key="1">
    <source>
        <dbReference type="HAMAP-Rule" id="MF_01527"/>
    </source>
</evidence>